<accession>Q2JUJ4</accession>
<proteinExistence type="inferred from homology"/>
<sequence length="128" mass="13759">MARQQRRGRKVKKNVPNGVAYIQSTFNNTIVTITDPNGDVVSWASAGSTGFKGAKKGTPFAAQMAAESAARQAMENGMRQIEVMVSGPGAGRETAIRALQATGLEITLIRDITPIPHNGCRPPKRRRV</sequence>
<name>RS11_SYNJA</name>
<dbReference type="EMBL" id="CP000239">
    <property type="protein sequence ID" value="ABC99620.1"/>
    <property type="molecule type" value="Genomic_DNA"/>
</dbReference>
<dbReference type="RefSeq" id="WP_011430298.1">
    <property type="nucleotide sequence ID" value="NC_007775.1"/>
</dbReference>
<dbReference type="SMR" id="Q2JUJ4"/>
<dbReference type="STRING" id="321327.CYA_1452"/>
<dbReference type="KEGG" id="cya:CYA_1452"/>
<dbReference type="eggNOG" id="COG0100">
    <property type="taxonomic scope" value="Bacteria"/>
</dbReference>
<dbReference type="HOGENOM" id="CLU_072439_5_0_3"/>
<dbReference type="OrthoDB" id="9806415at2"/>
<dbReference type="Proteomes" id="UP000008818">
    <property type="component" value="Chromosome"/>
</dbReference>
<dbReference type="GO" id="GO:1990904">
    <property type="term" value="C:ribonucleoprotein complex"/>
    <property type="evidence" value="ECO:0007669"/>
    <property type="project" value="UniProtKB-KW"/>
</dbReference>
<dbReference type="GO" id="GO:0005840">
    <property type="term" value="C:ribosome"/>
    <property type="evidence" value="ECO:0007669"/>
    <property type="project" value="UniProtKB-KW"/>
</dbReference>
<dbReference type="GO" id="GO:0019843">
    <property type="term" value="F:rRNA binding"/>
    <property type="evidence" value="ECO:0007669"/>
    <property type="project" value="UniProtKB-UniRule"/>
</dbReference>
<dbReference type="GO" id="GO:0003735">
    <property type="term" value="F:structural constituent of ribosome"/>
    <property type="evidence" value="ECO:0007669"/>
    <property type="project" value="InterPro"/>
</dbReference>
<dbReference type="GO" id="GO:0006412">
    <property type="term" value="P:translation"/>
    <property type="evidence" value="ECO:0007669"/>
    <property type="project" value="UniProtKB-UniRule"/>
</dbReference>
<dbReference type="FunFam" id="3.30.420.80:FF:000001">
    <property type="entry name" value="30S ribosomal protein S11"/>
    <property type="match status" value="1"/>
</dbReference>
<dbReference type="Gene3D" id="3.30.420.80">
    <property type="entry name" value="Ribosomal protein S11"/>
    <property type="match status" value="1"/>
</dbReference>
<dbReference type="HAMAP" id="MF_01310">
    <property type="entry name" value="Ribosomal_uS11"/>
    <property type="match status" value="1"/>
</dbReference>
<dbReference type="InterPro" id="IPR001971">
    <property type="entry name" value="Ribosomal_uS11"/>
</dbReference>
<dbReference type="InterPro" id="IPR019981">
    <property type="entry name" value="Ribosomal_uS11_bac-type"/>
</dbReference>
<dbReference type="InterPro" id="IPR018102">
    <property type="entry name" value="Ribosomal_uS11_CS"/>
</dbReference>
<dbReference type="InterPro" id="IPR036967">
    <property type="entry name" value="Ribosomal_uS11_sf"/>
</dbReference>
<dbReference type="NCBIfam" id="NF003698">
    <property type="entry name" value="PRK05309.1"/>
    <property type="match status" value="1"/>
</dbReference>
<dbReference type="NCBIfam" id="TIGR03632">
    <property type="entry name" value="uS11_bact"/>
    <property type="match status" value="1"/>
</dbReference>
<dbReference type="PANTHER" id="PTHR11759">
    <property type="entry name" value="40S RIBOSOMAL PROTEIN S14/30S RIBOSOMAL PROTEIN S11"/>
    <property type="match status" value="1"/>
</dbReference>
<dbReference type="Pfam" id="PF00411">
    <property type="entry name" value="Ribosomal_S11"/>
    <property type="match status" value="1"/>
</dbReference>
<dbReference type="PIRSF" id="PIRSF002131">
    <property type="entry name" value="Ribosomal_S11"/>
    <property type="match status" value="1"/>
</dbReference>
<dbReference type="SUPFAM" id="SSF53137">
    <property type="entry name" value="Translational machinery components"/>
    <property type="match status" value="1"/>
</dbReference>
<dbReference type="PROSITE" id="PS00054">
    <property type="entry name" value="RIBOSOMAL_S11"/>
    <property type="match status" value="1"/>
</dbReference>
<reference key="1">
    <citation type="journal article" date="2007" name="ISME J.">
        <title>Population level functional diversity in a microbial community revealed by comparative genomic and metagenomic analyses.</title>
        <authorList>
            <person name="Bhaya D."/>
            <person name="Grossman A.R."/>
            <person name="Steunou A.-S."/>
            <person name="Khuri N."/>
            <person name="Cohan F.M."/>
            <person name="Hamamura N."/>
            <person name="Melendrez M.C."/>
            <person name="Bateson M.M."/>
            <person name="Ward D.M."/>
            <person name="Heidelberg J.F."/>
        </authorList>
    </citation>
    <scope>NUCLEOTIDE SEQUENCE [LARGE SCALE GENOMIC DNA]</scope>
    <source>
        <strain>JA-3-3Ab</strain>
    </source>
</reference>
<protein>
    <recommendedName>
        <fullName evidence="1">Small ribosomal subunit protein uS11</fullName>
    </recommendedName>
    <alternativeName>
        <fullName evidence="2">30S ribosomal protein S11</fullName>
    </alternativeName>
</protein>
<feature type="chain" id="PRO_0000294877" description="Small ribosomal subunit protein uS11">
    <location>
        <begin position="1"/>
        <end position="128"/>
    </location>
</feature>
<keyword id="KW-0687">Ribonucleoprotein</keyword>
<keyword id="KW-0689">Ribosomal protein</keyword>
<keyword id="KW-0694">RNA-binding</keyword>
<keyword id="KW-0699">rRNA-binding</keyword>
<gene>
    <name evidence="1" type="primary">rpsK</name>
    <name evidence="1" type="synonym">rps11</name>
    <name type="ordered locus">CYA_1452</name>
</gene>
<comment type="function">
    <text evidence="1">Located on the platform of the 30S subunit, it bridges several disparate RNA helices of the 16S rRNA. Forms part of the Shine-Dalgarno cleft in the 70S ribosome.</text>
</comment>
<comment type="subunit">
    <text evidence="1">Part of the 30S ribosomal subunit. Interacts with proteins S7 and S18. Binds to IF-3.</text>
</comment>
<comment type="similarity">
    <text evidence="1">Belongs to the universal ribosomal protein uS11 family.</text>
</comment>
<evidence type="ECO:0000255" key="1">
    <source>
        <dbReference type="HAMAP-Rule" id="MF_01310"/>
    </source>
</evidence>
<evidence type="ECO:0000305" key="2"/>
<organism>
    <name type="scientific">Synechococcus sp. (strain JA-3-3Ab)</name>
    <name type="common">Cyanobacteria bacterium Yellowstone A-Prime</name>
    <dbReference type="NCBI Taxonomy" id="321327"/>
    <lineage>
        <taxon>Bacteria</taxon>
        <taxon>Bacillati</taxon>
        <taxon>Cyanobacteriota</taxon>
        <taxon>Cyanophyceae</taxon>
        <taxon>Synechococcales</taxon>
        <taxon>Synechococcaceae</taxon>
        <taxon>Synechococcus</taxon>
    </lineage>
</organism>